<gene>
    <name evidence="2" type="primary">tuf</name>
    <name type="ordered locus">Cphy_0238</name>
</gene>
<keyword id="KW-0963">Cytoplasm</keyword>
<keyword id="KW-0251">Elongation factor</keyword>
<keyword id="KW-0342">GTP-binding</keyword>
<keyword id="KW-0378">Hydrolase</keyword>
<keyword id="KW-0460">Magnesium</keyword>
<keyword id="KW-0479">Metal-binding</keyword>
<keyword id="KW-0547">Nucleotide-binding</keyword>
<keyword id="KW-0648">Protein biosynthesis</keyword>
<keyword id="KW-1185">Reference proteome</keyword>
<proteinExistence type="inferred from homology"/>
<feature type="chain" id="PRO_1000076095" description="Elongation factor Tu">
    <location>
        <begin position="1"/>
        <end position="397"/>
    </location>
</feature>
<feature type="domain" description="tr-type G">
    <location>
        <begin position="10"/>
        <end position="206"/>
    </location>
</feature>
<feature type="region of interest" description="G1" evidence="1">
    <location>
        <begin position="19"/>
        <end position="26"/>
    </location>
</feature>
<feature type="region of interest" description="G2" evidence="1">
    <location>
        <begin position="61"/>
        <end position="65"/>
    </location>
</feature>
<feature type="region of interest" description="G3" evidence="1">
    <location>
        <begin position="82"/>
        <end position="85"/>
    </location>
</feature>
<feature type="region of interest" description="G4" evidence="1">
    <location>
        <begin position="137"/>
        <end position="140"/>
    </location>
</feature>
<feature type="region of interest" description="G5" evidence="1">
    <location>
        <begin position="175"/>
        <end position="177"/>
    </location>
</feature>
<feature type="binding site" evidence="2">
    <location>
        <begin position="19"/>
        <end position="26"/>
    </location>
    <ligand>
        <name>GTP</name>
        <dbReference type="ChEBI" id="CHEBI:37565"/>
    </ligand>
</feature>
<feature type="binding site" evidence="2">
    <location>
        <position position="26"/>
    </location>
    <ligand>
        <name>Mg(2+)</name>
        <dbReference type="ChEBI" id="CHEBI:18420"/>
    </ligand>
</feature>
<feature type="binding site" evidence="2">
    <location>
        <begin position="82"/>
        <end position="86"/>
    </location>
    <ligand>
        <name>GTP</name>
        <dbReference type="ChEBI" id="CHEBI:37565"/>
    </ligand>
</feature>
<feature type="binding site" evidence="2">
    <location>
        <begin position="137"/>
        <end position="140"/>
    </location>
    <ligand>
        <name>GTP</name>
        <dbReference type="ChEBI" id="CHEBI:37565"/>
    </ligand>
</feature>
<comment type="function">
    <text evidence="2">GTP hydrolase that promotes the GTP-dependent binding of aminoacyl-tRNA to the A-site of ribosomes during protein biosynthesis.</text>
</comment>
<comment type="catalytic activity">
    <reaction evidence="2">
        <text>GTP + H2O = GDP + phosphate + H(+)</text>
        <dbReference type="Rhea" id="RHEA:19669"/>
        <dbReference type="ChEBI" id="CHEBI:15377"/>
        <dbReference type="ChEBI" id="CHEBI:15378"/>
        <dbReference type="ChEBI" id="CHEBI:37565"/>
        <dbReference type="ChEBI" id="CHEBI:43474"/>
        <dbReference type="ChEBI" id="CHEBI:58189"/>
        <dbReference type="EC" id="3.6.5.3"/>
    </reaction>
    <physiologicalReaction direction="left-to-right" evidence="2">
        <dbReference type="Rhea" id="RHEA:19670"/>
    </physiologicalReaction>
</comment>
<comment type="subunit">
    <text evidence="2">Monomer.</text>
</comment>
<comment type="subcellular location">
    <subcellularLocation>
        <location evidence="2">Cytoplasm</location>
    </subcellularLocation>
</comment>
<comment type="similarity">
    <text evidence="2">Belongs to the TRAFAC class translation factor GTPase superfamily. Classic translation factor GTPase family. EF-Tu/EF-1A subfamily.</text>
</comment>
<evidence type="ECO:0000250" key="1"/>
<evidence type="ECO:0000255" key="2">
    <source>
        <dbReference type="HAMAP-Rule" id="MF_00118"/>
    </source>
</evidence>
<reference key="1">
    <citation type="submission" date="2007-11" db="EMBL/GenBank/DDBJ databases">
        <title>Complete genome sequence of Clostridium phytofermentans ISDg.</title>
        <authorList>
            <person name="Leschine S.B."/>
            <person name="Warnick T.A."/>
            <person name="Blanchard J.L."/>
            <person name="Schnell D.J."/>
            <person name="Petit E.L."/>
            <person name="LaTouf W.G."/>
            <person name="Copeland A."/>
            <person name="Lucas S."/>
            <person name="Lapidus A."/>
            <person name="Barry K."/>
            <person name="Glavina del Rio T."/>
            <person name="Dalin E."/>
            <person name="Tice H."/>
            <person name="Pitluck S."/>
            <person name="Kiss H."/>
            <person name="Brettin T."/>
            <person name="Bruce D."/>
            <person name="Detter J.C."/>
            <person name="Han C."/>
            <person name="Kuske C."/>
            <person name="Schmutz J."/>
            <person name="Larimer F."/>
            <person name="Land M."/>
            <person name="Hauser L."/>
            <person name="Kyrpides N."/>
            <person name="Kim E.A."/>
            <person name="Richardson P."/>
        </authorList>
    </citation>
    <scope>NUCLEOTIDE SEQUENCE [LARGE SCALE GENOMIC DNA]</scope>
    <source>
        <strain>ATCC 700394 / DSM 18823 / ISDg</strain>
    </source>
</reference>
<organism>
    <name type="scientific">Lachnoclostridium phytofermentans (strain ATCC 700394 / DSM 18823 / ISDg)</name>
    <name type="common">Clostridium phytofermentans</name>
    <dbReference type="NCBI Taxonomy" id="357809"/>
    <lineage>
        <taxon>Bacteria</taxon>
        <taxon>Bacillati</taxon>
        <taxon>Bacillota</taxon>
        <taxon>Clostridia</taxon>
        <taxon>Lachnospirales</taxon>
        <taxon>Lachnospiraceae</taxon>
    </lineage>
</organism>
<dbReference type="EC" id="3.6.5.3" evidence="2"/>
<dbReference type="EMBL" id="CP000885">
    <property type="protein sequence ID" value="ABX40625.1"/>
    <property type="molecule type" value="Genomic_DNA"/>
</dbReference>
<dbReference type="RefSeq" id="WP_012198268.1">
    <property type="nucleotide sequence ID" value="NC_010001.1"/>
</dbReference>
<dbReference type="SMR" id="A9KRZ4"/>
<dbReference type="STRING" id="357809.Cphy_0238"/>
<dbReference type="KEGG" id="cpy:Cphy_0238"/>
<dbReference type="eggNOG" id="COG0050">
    <property type="taxonomic scope" value="Bacteria"/>
</dbReference>
<dbReference type="HOGENOM" id="CLU_007265_0_1_9"/>
<dbReference type="OrthoDB" id="9804504at2"/>
<dbReference type="Proteomes" id="UP000000370">
    <property type="component" value="Chromosome"/>
</dbReference>
<dbReference type="GO" id="GO:0005829">
    <property type="term" value="C:cytosol"/>
    <property type="evidence" value="ECO:0007669"/>
    <property type="project" value="TreeGrafter"/>
</dbReference>
<dbReference type="GO" id="GO:0005525">
    <property type="term" value="F:GTP binding"/>
    <property type="evidence" value="ECO:0007669"/>
    <property type="project" value="UniProtKB-UniRule"/>
</dbReference>
<dbReference type="GO" id="GO:0003924">
    <property type="term" value="F:GTPase activity"/>
    <property type="evidence" value="ECO:0007669"/>
    <property type="project" value="InterPro"/>
</dbReference>
<dbReference type="GO" id="GO:0003746">
    <property type="term" value="F:translation elongation factor activity"/>
    <property type="evidence" value="ECO:0007669"/>
    <property type="project" value="UniProtKB-UniRule"/>
</dbReference>
<dbReference type="CDD" id="cd01884">
    <property type="entry name" value="EF_Tu"/>
    <property type="match status" value="1"/>
</dbReference>
<dbReference type="CDD" id="cd03697">
    <property type="entry name" value="EFTU_II"/>
    <property type="match status" value="1"/>
</dbReference>
<dbReference type="CDD" id="cd03707">
    <property type="entry name" value="EFTU_III"/>
    <property type="match status" value="1"/>
</dbReference>
<dbReference type="FunFam" id="2.40.30.10:FF:000001">
    <property type="entry name" value="Elongation factor Tu"/>
    <property type="match status" value="1"/>
</dbReference>
<dbReference type="FunFam" id="3.40.50.300:FF:000003">
    <property type="entry name" value="Elongation factor Tu"/>
    <property type="match status" value="1"/>
</dbReference>
<dbReference type="Gene3D" id="3.40.50.300">
    <property type="entry name" value="P-loop containing nucleotide triphosphate hydrolases"/>
    <property type="match status" value="1"/>
</dbReference>
<dbReference type="Gene3D" id="2.40.30.10">
    <property type="entry name" value="Translation factors"/>
    <property type="match status" value="2"/>
</dbReference>
<dbReference type="HAMAP" id="MF_00118_B">
    <property type="entry name" value="EF_Tu_B"/>
    <property type="match status" value="1"/>
</dbReference>
<dbReference type="InterPro" id="IPR041709">
    <property type="entry name" value="EF-Tu_GTP-bd"/>
</dbReference>
<dbReference type="InterPro" id="IPR050055">
    <property type="entry name" value="EF-Tu_GTPase"/>
</dbReference>
<dbReference type="InterPro" id="IPR004161">
    <property type="entry name" value="EFTu-like_2"/>
</dbReference>
<dbReference type="InterPro" id="IPR033720">
    <property type="entry name" value="EFTU_2"/>
</dbReference>
<dbReference type="InterPro" id="IPR031157">
    <property type="entry name" value="G_TR_CS"/>
</dbReference>
<dbReference type="InterPro" id="IPR027417">
    <property type="entry name" value="P-loop_NTPase"/>
</dbReference>
<dbReference type="InterPro" id="IPR005225">
    <property type="entry name" value="Small_GTP-bd"/>
</dbReference>
<dbReference type="InterPro" id="IPR000795">
    <property type="entry name" value="T_Tr_GTP-bd_dom"/>
</dbReference>
<dbReference type="InterPro" id="IPR009000">
    <property type="entry name" value="Transl_B-barrel_sf"/>
</dbReference>
<dbReference type="InterPro" id="IPR009001">
    <property type="entry name" value="Transl_elong_EF1A/Init_IF2_C"/>
</dbReference>
<dbReference type="InterPro" id="IPR004541">
    <property type="entry name" value="Transl_elong_EFTu/EF1A_bac/org"/>
</dbReference>
<dbReference type="InterPro" id="IPR004160">
    <property type="entry name" value="Transl_elong_EFTu/EF1A_C"/>
</dbReference>
<dbReference type="NCBIfam" id="TIGR00485">
    <property type="entry name" value="EF-Tu"/>
    <property type="match status" value="1"/>
</dbReference>
<dbReference type="NCBIfam" id="NF000766">
    <property type="entry name" value="PRK00049.1"/>
    <property type="match status" value="1"/>
</dbReference>
<dbReference type="NCBIfam" id="NF009372">
    <property type="entry name" value="PRK12735.1"/>
    <property type="match status" value="1"/>
</dbReference>
<dbReference type="NCBIfam" id="NF009373">
    <property type="entry name" value="PRK12736.1"/>
    <property type="match status" value="1"/>
</dbReference>
<dbReference type="NCBIfam" id="TIGR00231">
    <property type="entry name" value="small_GTP"/>
    <property type="match status" value="1"/>
</dbReference>
<dbReference type="PANTHER" id="PTHR43721:SF22">
    <property type="entry name" value="ELONGATION FACTOR TU, MITOCHONDRIAL"/>
    <property type="match status" value="1"/>
</dbReference>
<dbReference type="PANTHER" id="PTHR43721">
    <property type="entry name" value="ELONGATION FACTOR TU-RELATED"/>
    <property type="match status" value="1"/>
</dbReference>
<dbReference type="Pfam" id="PF00009">
    <property type="entry name" value="GTP_EFTU"/>
    <property type="match status" value="1"/>
</dbReference>
<dbReference type="Pfam" id="PF03144">
    <property type="entry name" value="GTP_EFTU_D2"/>
    <property type="match status" value="1"/>
</dbReference>
<dbReference type="Pfam" id="PF03143">
    <property type="entry name" value="GTP_EFTU_D3"/>
    <property type="match status" value="1"/>
</dbReference>
<dbReference type="PRINTS" id="PR00315">
    <property type="entry name" value="ELONGATNFCT"/>
</dbReference>
<dbReference type="SUPFAM" id="SSF50465">
    <property type="entry name" value="EF-Tu/eEF-1alpha/eIF2-gamma C-terminal domain"/>
    <property type="match status" value="1"/>
</dbReference>
<dbReference type="SUPFAM" id="SSF52540">
    <property type="entry name" value="P-loop containing nucleoside triphosphate hydrolases"/>
    <property type="match status" value="1"/>
</dbReference>
<dbReference type="SUPFAM" id="SSF50447">
    <property type="entry name" value="Translation proteins"/>
    <property type="match status" value="1"/>
</dbReference>
<dbReference type="PROSITE" id="PS00301">
    <property type="entry name" value="G_TR_1"/>
    <property type="match status" value="1"/>
</dbReference>
<dbReference type="PROSITE" id="PS51722">
    <property type="entry name" value="G_TR_2"/>
    <property type="match status" value="1"/>
</dbReference>
<accession>A9KRZ4</accession>
<sequence>MGKAKFERNKPHCNIGTIGHVDHGKTTLTAAITKTLHDRLGTGEAVAFDKIDKAPEERERGITISTSHVEYESKARHYAHVDCPGHADYVKNMITGAAQMDGAILVVAATDGVMAQTKEHILLSRQVGVPYIVVFMNKCDMVDDPELLELVEMEIRELLSEYEFPGDDTPIIQGSALRALEDPNSQWGDKILELFDAVDTWIPDPQRATDKPFLMPIEDVFSITGRGTVATGRVERGVLHVSEEVEIVGVKEETRKVVVTGIEMFRKLLDEAQAGDNIGALLRGVQRTDIERGQVLCKPGTIKCYKKFTAQVYVLTKDEGGRHTPFFNNYRPQFYFRTTDVTGVCNLPEGVEMCMPGDNIEMNIELIHPIAMEQGLGFAIREGGRTVGSGKVATIIG</sequence>
<name>EFTU_LACP7</name>
<protein>
    <recommendedName>
        <fullName evidence="2">Elongation factor Tu</fullName>
        <shortName evidence="2">EF-Tu</shortName>
        <ecNumber evidence="2">3.6.5.3</ecNumber>
    </recommendedName>
</protein>